<name>RAB3D_HUMAN</name>
<reference key="1">
    <citation type="journal article" date="1999" name="Biochim. Biophys. Acta">
        <title>Molecular cloning of cDNA encoding human Rab3D whose expression is upregulated with myeloid differentiation.</title>
        <authorList>
            <person name="Nishio H."/>
            <person name="Suda T."/>
            <person name="Sawada K."/>
            <person name="Miyamoto T."/>
            <person name="Koike T."/>
            <person name="Yamaguchi Y."/>
        </authorList>
    </citation>
    <scope>NUCLEOTIDE SEQUENCE [MRNA]</scope>
    <scope>INDUCTION</scope>
    <scope>TISSUE SPECIFICITY</scope>
    <source>
        <tissue>Hematopoietic</tissue>
    </source>
</reference>
<reference key="2">
    <citation type="submission" date="2002-04" db="EMBL/GenBank/DDBJ databases">
        <title>cDNA clones of human proteins involved in signal transduction sequenced by the Guthrie cDNA resource center (www.cdna.org).</title>
        <authorList>
            <person name="Puhl H.L. III"/>
            <person name="Ikeda S.R."/>
            <person name="Aronstam R.S."/>
        </authorList>
    </citation>
    <scope>NUCLEOTIDE SEQUENCE [LARGE SCALE MRNA]</scope>
    <source>
        <tissue>Brain</tissue>
    </source>
</reference>
<reference key="3">
    <citation type="journal article" date="2004" name="Genome Res.">
        <title>The status, quality, and expansion of the NIH full-length cDNA project: the Mammalian Gene Collection (MGC).</title>
        <authorList>
            <consortium name="The MGC Project Team"/>
        </authorList>
    </citation>
    <scope>NUCLEOTIDE SEQUENCE [LARGE SCALE MRNA]</scope>
    <source>
        <tissue>Ovary</tissue>
    </source>
</reference>
<reference key="4">
    <citation type="journal article" date="2011" name="BMC Syst. Biol.">
        <title>Initial characterization of the human central proteome.</title>
        <authorList>
            <person name="Burkard T.R."/>
            <person name="Planyavsky M."/>
            <person name="Kaupe I."/>
            <person name="Breitwieser F.P."/>
            <person name="Buerckstuemmer T."/>
            <person name="Bennett K.L."/>
            <person name="Superti-Furga G."/>
            <person name="Colinge J."/>
        </authorList>
    </citation>
    <scope>IDENTIFICATION BY MASS SPECTROMETRY [LARGE SCALE ANALYSIS]</scope>
</reference>
<reference key="5">
    <citation type="journal article" date="2012" name="Proc. Natl. Acad. Sci. U.S.A.">
        <title>N-terminal acetylome analyses and functional insights of the N-terminal acetyltransferase NatB.</title>
        <authorList>
            <person name="Van Damme P."/>
            <person name="Lasa M."/>
            <person name="Polevoda B."/>
            <person name="Gazquez C."/>
            <person name="Elosegui-Artola A."/>
            <person name="Kim D.S."/>
            <person name="De Juan-Pardo E."/>
            <person name="Demeyer K."/>
            <person name="Hole K."/>
            <person name="Larrea E."/>
            <person name="Timmerman E."/>
            <person name="Prieto J."/>
            <person name="Arnesen T."/>
            <person name="Sherman F."/>
            <person name="Gevaert K."/>
            <person name="Aldabe R."/>
        </authorList>
    </citation>
    <scope>ACETYLATION [LARGE SCALE ANALYSIS] AT ALA-2</scope>
    <scope>CLEAVAGE OF INITIATOR METHIONINE [LARGE SCALE ANALYSIS]</scope>
    <scope>IDENTIFICATION BY MASS SPECTROMETRY [LARGE SCALE ANALYSIS]</scope>
</reference>
<reference key="6">
    <citation type="journal article" date="2017" name="Elife">
        <title>Systematic proteomic analysis of LRRK2-mediated Rab GTPase phosphorylation establishes a connection to ciliogenesis.</title>
        <authorList>
            <person name="Steger M."/>
            <person name="Diez F."/>
            <person name="Dhekne H.S."/>
            <person name="Lis P."/>
            <person name="Nirujogi R.S."/>
            <person name="Karayel O."/>
            <person name="Tonelli F."/>
            <person name="Martinez T.N."/>
            <person name="Lorentzen E."/>
            <person name="Pfeffer S.R."/>
            <person name="Alessi D.R."/>
            <person name="Mann M."/>
        </authorList>
    </citation>
    <scope>INTERACTION WITH CHM AND CHML</scope>
    <scope>PHOSPHORYLATION AT THR-86</scope>
    <scope>MUTAGENESIS OF THR-86</scope>
</reference>
<reference key="7">
    <citation type="journal article" date="2022" name="Nat. Commun.">
        <title>Rep15 interacts with several Rab GTPases and has a distinct fold for a Rab effector.</title>
        <authorList>
            <person name="Rai A."/>
            <person name="Singh A.K."/>
            <person name="Bleimling N."/>
            <person name="Posern G."/>
            <person name="Vetter I.R."/>
            <person name="Goody R.S."/>
        </authorList>
    </citation>
    <scope>INTERACTION WITH REP15</scope>
</reference>
<reference key="8">
    <citation type="submission" date="2009-02" db="PDB data bank">
        <title>Crystal structure of human RAB3D in complex with GDP.</title>
        <authorList>
            <consortium name="Structural genomics consortium (SGC)"/>
        </authorList>
    </citation>
    <scope>X-RAY CRYSTALLOGRAPHY (1.53 ANGSTROMS) OF 20-189 IN COMPLEX WITH GDP AND MG(2+)</scope>
    <scope>COFACTOR</scope>
</reference>
<evidence type="ECO:0000250" key="1"/>
<evidence type="ECO:0000250" key="2">
    <source>
        <dbReference type="UniProtKB" id="P20336"/>
    </source>
</evidence>
<evidence type="ECO:0000250" key="3">
    <source>
        <dbReference type="UniProtKB" id="P20337"/>
    </source>
</evidence>
<evidence type="ECO:0000250" key="4">
    <source>
        <dbReference type="UniProtKB" id="P35276"/>
    </source>
</evidence>
<evidence type="ECO:0000250" key="5">
    <source>
        <dbReference type="UniProtKB" id="P63012"/>
    </source>
</evidence>
<evidence type="ECO:0000256" key="6">
    <source>
        <dbReference type="SAM" id="MobiDB-lite"/>
    </source>
</evidence>
<evidence type="ECO:0000269" key="7">
    <source>
    </source>
</evidence>
<evidence type="ECO:0000269" key="8">
    <source>
    </source>
</evidence>
<evidence type="ECO:0000269" key="9">
    <source>
    </source>
</evidence>
<evidence type="ECO:0000269" key="10">
    <source ref="8"/>
</evidence>
<evidence type="ECO:0000305" key="11"/>
<evidence type="ECO:0000312" key="12">
    <source>
        <dbReference type="HGNC" id="HGNC:9779"/>
    </source>
</evidence>
<evidence type="ECO:0007744" key="13">
    <source>
        <dbReference type="PDB" id="2GF9"/>
    </source>
</evidence>
<evidence type="ECO:0007744" key="14">
    <source>
    </source>
</evidence>
<evidence type="ECO:0007829" key="15">
    <source>
        <dbReference type="PDB" id="2GF9"/>
    </source>
</evidence>
<dbReference type="EC" id="3.6.5.2" evidence="2"/>
<dbReference type="EMBL" id="AF081353">
    <property type="protein sequence ID" value="AAC72918.1"/>
    <property type="molecule type" value="mRNA"/>
</dbReference>
<dbReference type="EMBL" id="AF498933">
    <property type="protein sequence ID" value="AAM21081.1"/>
    <property type="molecule type" value="mRNA"/>
</dbReference>
<dbReference type="EMBL" id="BC016471">
    <property type="protein sequence ID" value="AAH16471.1"/>
    <property type="molecule type" value="mRNA"/>
</dbReference>
<dbReference type="CCDS" id="CCDS12257.1"/>
<dbReference type="RefSeq" id="NP_004274.1">
    <property type="nucleotide sequence ID" value="NM_004283.4"/>
</dbReference>
<dbReference type="PDB" id="2GF9">
    <property type="method" value="X-ray"/>
    <property type="resolution" value="1.53 A"/>
    <property type="chains" value="A=20-189"/>
</dbReference>
<dbReference type="PDBsum" id="2GF9"/>
<dbReference type="SMR" id="O95716"/>
<dbReference type="BioGRID" id="114919">
    <property type="interactions" value="41"/>
</dbReference>
<dbReference type="FunCoup" id="O95716">
    <property type="interactions" value="234"/>
</dbReference>
<dbReference type="IntAct" id="O95716">
    <property type="interactions" value="22"/>
</dbReference>
<dbReference type="STRING" id="9606.ENSP00000222120"/>
<dbReference type="iPTMnet" id="O95716"/>
<dbReference type="PhosphoSitePlus" id="O95716"/>
<dbReference type="SwissPalm" id="O95716"/>
<dbReference type="BioMuta" id="RAB3D"/>
<dbReference type="jPOST" id="O95716"/>
<dbReference type="MassIVE" id="O95716"/>
<dbReference type="PaxDb" id="9606-ENSP00000222120"/>
<dbReference type="PeptideAtlas" id="O95716"/>
<dbReference type="ProteomicsDB" id="51010"/>
<dbReference type="Pumba" id="O95716"/>
<dbReference type="Antibodypedia" id="25779">
    <property type="antibodies" value="158 antibodies from 28 providers"/>
</dbReference>
<dbReference type="DNASU" id="9545"/>
<dbReference type="Ensembl" id="ENST00000222120.8">
    <property type="protein sequence ID" value="ENSP00000222120.2"/>
    <property type="gene ID" value="ENSG00000105514.8"/>
</dbReference>
<dbReference type="Ensembl" id="ENST00000589655.1">
    <property type="protein sequence ID" value="ENSP00000466000.1"/>
    <property type="gene ID" value="ENSG00000105514.8"/>
</dbReference>
<dbReference type="GeneID" id="9545"/>
<dbReference type="KEGG" id="hsa:9545"/>
<dbReference type="MANE-Select" id="ENST00000222120.8">
    <property type="protein sequence ID" value="ENSP00000222120.2"/>
    <property type="RefSeq nucleotide sequence ID" value="NM_004283.4"/>
    <property type="RefSeq protein sequence ID" value="NP_004274.1"/>
</dbReference>
<dbReference type="UCSC" id="uc002mqx.3">
    <property type="organism name" value="human"/>
</dbReference>
<dbReference type="AGR" id="HGNC:9779"/>
<dbReference type="CTD" id="9545"/>
<dbReference type="DisGeNET" id="9545"/>
<dbReference type="GeneCards" id="RAB3D"/>
<dbReference type="HGNC" id="HGNC:9779">
    <property type="gene designation" value="RAB3D"/>
</dbReference>
<dbReference type="HPA" id="ENSG00000105514">
    <property type="expression patterns" value="Tissue enhanced (pancreas, skin)"/>
</dbReference>
<dbReference type="MIM" id="604350">
    <property type="type" value="gene"/>
</dbReference>
<dbReference type="neXtProt" id="NX_O95716"/>
<dbReference type="OpenTargets" id="ENSG00000105514"/>
<dbReference type="PharmGKB" id="PA34134"/>
<dbReference type="VEuPathDB" id="HostDB:ENSG00000105514"/>
<dbReference type="eggNOG" id="KOG0093">
    <property type="taxonomic scope" value="Eukaryota"/>
</dbReference>
<dbReference type="GeneTree" id="ENSGT00940000157552"/>
<dbReference type="HOGENOM" id="CLU_041217_10_1_1"/>
<dbReference type="InParanoid" id="O95716"/>
<dbReference type="OMA" id="MEGDINL"/>
<dbReference type="OrthoDB" id="9989112at2759"/>
<dbReference type="PAN-GO" id="O95716">
    <property type="GO annotations" value="9 GO annotations based on evolutionary models"/>
</dbReference>
<dbReference type="PhylomeDB" id="O95716"/>
<dbReference type="TreeFam" id="TF313199"/>
<dbReference type="PathwayCommons" id="O95716"/>
<dbReference type="Reactome" id="R-HSA-6798695">
    <property type="pathway name" value="Neutrophil degranulation"/>
</dbReference>
<dbReference type="Reactome" id="R-HSA-8873719">
    <property type="pathway name" value="RAB geranylgeranylation"/>
</dbReference>
<dbReference type="SignaLink" id="O95716"/>
<dbReference type="BioGRID-ORCS" id="9545">
    <property type="hits" value="19 hits in 1146 CRISPR screens"/>
</dbReference>
<dbReference type="ChiTaRS" id="RAB3D">
    <property type="organism name" value="human"/>
</dbReference>
<dbReference type="EvolutionaryTrace" id="O95716"/>
<dbReference type="GeneWiki" id="RAB3D"/>
<dbReference type="GenomeRNAi" id="9545"/>
<dbReference type="Pharos" id="O95716">
    <property type="development level" value="Tbio"/>
</dbReference>
<dbReference type="PRO" id="PR:O95716"/>
<dbReference type="Proteomes" id="UP000005640">
    <property type="component" value="Chromosome 19"/>
</dbReference>
<dbReference type="RNAct" id="O95716">
    <property type="molecule type" value="protein"/>
</dbReference>
<dbReference type="Bgee" id="ENSG00000105514">
    <property type="expression patterns" value="Expressed in parotid gland and 172 other cell types or tissues"/>
</dbReference>
<dbReference type="ExpressionAtlas" id="O95716">
    <property type="expression patterns" value="baseline and differential"/>
</dbReference>
<dbReference type="GO" id="GO:0035577">
    <property type="term" value="C:azurophil granule membrane"/>
    <property type="evidence" value="ECO:0000304"/>
    <property type="project" value="Reactome"/>
</dbReference>
<dbReference type="GO" id="GO:0005881">
    <property type="term" value="C:cytoplasmic microtubule"/>
    <property type="evidence" value="ECO:0000314"/>
    <property type="project" value="GO_Central"/>
</dbReference>
<dbReference type="GO" id="GO:0005768">
    <property type="term" value="C:endosome"/>
    <property type="evidence" value="ECO:0000318"/>
    <property type="project" value="GO_Central"/>
</dbReference>
<dbReference type="GO" id="GO:0070062">
    <property type="term" value="C:extracellular exosome"/>
    <property type="evidence" value="ECO:0007005"/>
    <property type="project" value="UniProtKB"/>
</dbReference>
<dbReference type="GO" id="GO:0005886">
    <property type="term" value="C:plasma membrane"/>
    <property type="evidence" value="ECO:0000318"/>
    <property type="project" value="GO_Central"/>
</dbReference>
<dbReference type="GO" id="GO:0099503">
    <property type="term" value="C:secretory vesicle"/>
    <property type="evidence" value="ECO:0000314"/>
    <property type="project" value="GO_Central"/>
</dbReference>
<dbReference type="GO" id="GO:0008021">
    <property type="term" value="C:synaptic vesicle"/>
    <property type="evidence" value="ECO:0000318"/>
    <property type="project" value="GO_Central"/>
</dbReference>
<dbReference type="GO" id="GO:0042588">
    <property type="term" value="C:zymogen granule"/>
    <property type="evidence" value="ECO:0007669"/>
    <property type="project" value="Ensembl"/>
</dbReference>
<dbReference type="GO" id="GO:0005525">
    <property type="term" value="F:GTP binding"/>
    <property type="evidence" value="ECO:0007669"/>
    <property type="project" value="UniProtKB-KW"/>
</dbReference>
<dbReference type="GO" id="GO:0030742">
    <property type="term" value="F:GTP-dependent protein binding"/>
    <property type="evidence" value="ECO:0007669"/>
    <property type="project" value="Ensembl"/>
</dbReference>
<dbReference type="GO" id="GO:0003924">
    <property type="term" value="F:GTPase activity"/>
    <property type="evidence" value="ECO:0000318"/>
    <property type="project" value="GO_Central"/>
</dbReference>
<dbReference type="GO" id="GO:0031489">
    <property type="term" value="F:myosin V binding"/>
    <property type="evidence" value="ECO:0000353"/>
    <property type="project" value="UniProtKB"/>
</dbReference>
<dbReference type="GO" id="GO:0045453">
    <property type="term" value="P:bone resorption"/>
    <property type="evidence" value="ECO:0000314"/>
    <property type="project" value="GO_Central"/>
</dbReference>
<dbReference type="GO" id="GO:0006887">
    <property type="term" value="P:exocytosis"/>
    <property type="evidence" value="ECO:0000318"/>
    <property type="project" value="GO_Central"/>
</dbReference>
<dbReference type="GO" id="GO:1903307">
    <property type="term" value="P:positive regulation of regulated secretory pathway"/>
    <property type="evidence" value="ECO:0000315"/>
    <property type="project" value="UniProtKB"/>
</dbReference>
<dbReference type="GO" id="GO:0015031">
    <property type="term" value="P:protein transport"/>
    <property type="evidence" value="ECO:0007669"/>
    <property type="project" value="UniProtKB-KW"/>
</dbReference>
<dbReference type="CDD" id="cd01865">
    <property type="entry name" value="Rab3"/>
    <property type="match status" value="1"/>
</dbReference>
<dbReference type="FunFam" id="3.40.50.300:FF:000448">
    <property type="entry name" value="RAB3D, member RAS oncogene family"/>
    <property type="match status" value="1"/>
</dbReference>
<dbReference type="Gene3D" id="3.40.50.300">
    <property type="entry name" value="P-loop containing nucleotide triphosphate hydrolases"/>
    <property type="match status" value="1"/>
</dbReference>
<dbReference type="InterPro" id="IPR027417">
    <property type="entry name" value="P-loop_NTPase"/>
</dbReference>
<dbReference type="InterPro" id="IPR037872">
    <property type="entry name" value="Rab3"/>
</dbReference>
<dbReference type="InterPro" id="IPR005225">
    <property type="entry name" value="Small_GTP-bd"/>
</dbReference>
<dbReference type="InterPro" id="IPR001806">
    <property type="entry name" value="Small_GTPase"/>
</dbReference>
<dbReference type="InterPro" id="IPR050305">
    <property type="entry name" value="Small_GTPase_Rab"/>
</dbReference>
<dbReference type="NCBIfam" id="TIGR00231">
    <property type="entry name" value="small_GTP"/>
    <property type="match status" value="1"/>
</dbReference>
<dbReference type="PANTHER" id="PTHR47980">
    <property type="entry name" value="LD44762P"/>
    <property type="match status" value="1"/>
</dbReference>
<dbReference type="Pfam" id="PF00071">
    <property type="entry name" value="Ras"/>
    <property type="match status" value="1"/>
</dbReference>
<dbReference type="PRINTS" id="PR00449">
    <property type="entry name" value="RASTRNSFRMNG"/>
</dbReference>
<dbReference type="SMART" id="SM00175">
    <property type="entry name" value="RAB"/>
    <property type="match status" value="1"/>
</dbReference>
<dbReference type="SMART" id="SM00176">
    <property type="entry name" value="RAN"/>
    <property type="match status" value="1"/>
</dbReference>
<dbReference type="SMART" id="SM00173">
    <property type="entry name" value="RAS"/>
    <property type="match status" value="1"/>
</dbReference>
<dbReference type="SMART" id="SM00174">
    <property type="entry name" value="RHO"/>
    <property type="match status" value="1"/>
</dbReference>
<dbReference type="SUPFAM" id="SSF52540">
    <property type="entry name" value="P-loop containing nucleoside triphosphate hydrolases"/>
    <property type="match status" value="1"/>
</dbReference>
<dbReference type="PROSITE" id="PS51419">
    <property type="entry name" value="RAB"/>
    <property type="match status" value="1"/>
</dbReference>
<gene>
    <name evidence="12" type="primary">RAB3D</name>
    <name type="synonym">GOV</name>
    <name type="synonym">RAB16</name>
</gene>
<feature type="initiator methionine" description="Removed" evidence="14">
    <location>
        <position position="1"/>
    </location>
</feature>
<feature type="chain" id="PRO_0000121088" description="Ras-related protein Rab-3D">
    <location>
        <begin position="2"/>
        <end position="219"/>
    </location>
</feature>
<feature type="region of interest" description="Disordered" evidence="6">
    <location>
        <begin position="190"/>
        <end position="219"/>
    </location>
</feature>
<feature type="short sequence motif" description="Switch 1" evidence="5">
    <location>
        <begin position="49"/>
        <end position="58"/>
    </location>
</feature>
<feature type="short sequence motif" description="Switch 2" evidence="5">
    <location>
        <begin position="80"/>
        <end position="96"/>
    </location>
</feature>
<feature type="compositionally biased region" description="Low complexity" evidence="6">
    <location>
        <begin position="190"/>
        <end position="199"/>
    </location>
</feature>
<feature type="binding site" evidence="10 13">
    <location>
        <begin position="29"/>
        <end position="37"/>
    </location>
    <ligand>
        <name>GDP</name>
        <dbReference type="ChEBI" id="CHEBI:58189"/>
    </ligand>
</feature>
<feature type="binding site" evidence="3">
    <location>
        <position position="31"/>
    </location>
    <ligand>
        <name>GTP</name>
        <dbReference type="ChEBI" id="CHEBI:37565"/>
    </ligand>
</feature>
<feature type="binding site" evidence="3">
    <location>
        <position position="32"/>
    </location>
    <ligand>
        <name>GTP</name>
        <dbReference type="ChEBI" id="CHEBI:37565"/>
    </ligand>
</feature>
<feature type="binding site" evidence="3">
    <location>
        <position position="33"/>
    </location>
    <ligand>
        <name>GTP</name>
        <dbReference type="ChEBI" id="CHEBI:37565"/>
    </ligand>
</feature>
<feature type="binding site" evidence="3">
    <location>
        <position position="34"/>
    </location>
    <ligand>
        <name>GTP</name>
        <dbReference type="ChEBI" id="CHEBI:37565"/>
    </ligand>
</feature>
<feature type="binding site" evidence="3">
    <location>
        <position position="35"/>
    </location>
    <ligand>
        <name>GTP</name>
        <dbReference type="ChEBI" id="CHEBI:37565"/>
    </ligand>
</feature>
<feature type="binding site" evidence="3">
    <location>
        <position position="36"/>
    </location>
    <ligand>
        <name>GTP</name>
        <dbReference type="ChEBI" id="CHEBI:37565"/>
    </ligand>
</feature>
<feature type="binding site" evidence="10 13">
    <location>
        <position position="36"/>
    </location>
    <ligand>
        <name>Mg(2+)</name>
        <dbReference type="ChEBI" id="CHEBI:18420"/>
    </ligand>
</feature>
<feature type="binding site" evidence="3">
    <location>
        <position position="37"/>
    </location>
    <ligand>
        <name>GTP</name>
        <dbReference type="ChEBI" id="CHEBI:37565"/>
    </ligand>
</feature>
<feature type="binding site" evidence="3">
    <location>
        <position position="49"/>
    </location>
    <ligand>
        <name>GTP</name>
        <dbReference type="ChEBI" id="CHEBI:37565"/>
    </ligand>
</feature>
<feature type="binding site" evidence="3">
    <location>
        <position position="53"/>
    </location>
    <ligand>
        <name>GTP</name>
        <dbReference type="ChEBI" id="CHEBI:37565"/>
    </ligand>
</feature>
<feature type="binding site" evidence="3">
    <location>
        <position position="54"/>
    </location>
    <ligand>
        <name>Mg(2+)</name>
        <dbReference type="ChEBI" id="CHEBI:18420"/>
    </ligand>
</feature>
<feature type="binding site" evidence="3">
    <location>
        <position position="77"/>
    </location>
    <ligand>
        <name>Mg(2+)</name>
        <dbReference type="ChEBI" id="CHEBI:18420"/>
    </ligand>
</feature>
<feature type="binding site" evidence="3">
    <location>
        <position position="80"/>
    </location>
    <ligand>
        <name>GTP</name>
        <dbReference type="ChEBI" id="CHEBI:37565"/>
    </ligand>
</feature>
<feature type="binding site" evidence="10 13">
    <location>
        <begin position="135"/>
        <end position="138"/>
    </location>
    <ligand>
        <name>GDP</name>
        <dbReference type="ChEBI" id="CHEBI:58189"/>
    </ligand>
</feature>
<feature type="binding site" evidence="3">
    <location>
        <position position="135"/>
    </location>
    <ligand>
        <name>GTP</name>
        <dbReference type="ChEBI" id="CHEBI:37565"/>
    </ligand>
</feature>
<feature type="binding site" evidence="3">
    <location>
        <position position="136"/>
    </location>
    <ligand>
        <name>GTP</name>
        <dbReference type="ChEBI" id="CHEBI:37565"/>
    </ligand>
</feature>
<feature type="binding site" evidence="3">
    <location>
        <position position="138"/>
    </location>
    <ligand>
        <name>GTP</name>
        <dbReference type="ChEBI" id="CHEBI:37565"/>
    </ligand>
</feature>
<feature type="binding site" evidence="10 13">
    <location>
        <begin position="165"/>
        <end position="167"/>
    </location>
    <ligand>
        <name>GDP</name>
        <dbReference type="ChEBI" id="CHEBI:58189"/>
    </ligand>
</feature>
<feature type="binding site" evidence="3">
    <location>
        <position position="166"/>
    </location>
    <ligand>
        <name>GTP</name>
        <dbReference type="ChEBI" id="CHEBI:37565"/>
    </ligand>
</feature>
<feature type="binding site" evidence="3">
    <location>
        <position position="167"/>
    </location>
    <ligand>
        <name>GTP</name>
        <dbReference type="ChEBI" id="CHEBI:37565"/>
    </ligand>
</feature>
<feature type="modified residue" description="N-acetylalanine" evidence="14">
    <location>
        <position position="2"/>
    </location>
</feature>
<feature type="modified residue" description="Phosphothreonine; by LRRK2" evidence="8">
    <location>
        <position position="86"/>
    </location>
</feature>
<feature type="modified residue" description="Phosphoserine" evidence="3">
    <location>
        <position position="190"/>
    </location>
</feature>
<feature type="modified residue" description="Cysteine methyl ester" evidence="1">
    <location>
        <position position="219"/>
    </location>
</feature>
<feature type="lipid moiety-binding region" description="S-geranylgeranyl cysteine" evidence="1">
    <location>
        <position position="217"/>
    </location>
</feature>
<feature type="lipid moiety-binding region" description="S-geranylgeranyl cysteine" evidence="1">
    <location>
        <position position="219"/>
    </location>
</feature>
<feature type="sequence variant" id="VAR_051710" description="In dbSNP:rs3969860.">
    <original>V</original>
    <variation>I</variation>
    <location>
        <position position="64"/>
    </location>
</feature>
<feature type="mutagenesis site" description="Loss of phosphorylation. Reduced binding of CHM and CHML binding." evidence="8">
    <original>T</original>
    <variation>A</variation>
    <location>
        <position position="86"/>
    </location>
</feature>
<feature type="mutagenesis site" description="Phosphomimetic mutant. Loss of CHM and CHML binding." evidence="8">
    <original>T</original>
    <variation>E</variation>
    <location>
        <position position="86"/>
    </location>
</feature>
<feature type="strand" evidence="15">
    <location>
        <begin position="20"/>
        <end position="28"/>
    </location>
</feature>
<feature type="helix" evidence="15">
    <location>
        <begin position="35"/>
        <end position="44"/>
    </location>
</feature>
<feature type="strand" evidence="15">
    <location>
        <begin position="58"/>
        <end position="66"/>
    </location>
</feature>
<feature type="strand" evidence="15">
    <location>
        <begin position="69"/>
        <end position="77"/>
    </location>
</feature>
<feature type="helix" evidence="15">
    <location>
        <begin position="88"/>
        <end position="92"/>
    </location>
</feature>
<feature type="strand" evidence="15">
    <location>
        <begin position="96"/>
        <end position="103"/>
    </location>
</feature>
<feature type="helix" evidence="15">
    <location>
        <begin position="107"/>
        <end position="111"/>
    </location>
</feature>
<feature type="helix" evidence="15">
    <location>
        <begin position="113"/>
        <end position="123"/>
    </location>
</feature>
<feature type="strand" evidence="15">
    <location>
        <begin position="129"/>
        <end position="135"/>
    </location>
</feature>
<feature type="helix" evidence="15">
    <location>
        <begin position="140"/>
        <end position="142"/>
    </location>
</feature>
<feature type="helix" evidence="15">
    <location>
        <begin position="147"/>
        <end position="157"/>
    </location>
</feature>
<feature type="strand" evidence="15">
    <location>
        <begin position="160"/>
        <end position="163"/>
    </location>
</feature>
<feature type="turn" evidence="15">
    <location>
        <begin position="166"/>
        <end position="169"/>
    </location>
</feature>
<feature type="helix" evidence="15">
    <location>
        <begin position="172"/>
        <end position="187"/>
    </location>
</feature>
<proteinExistence type="evidence at protein level"/>
<comment type="function">
    <text evidence="2 4">The small GTPases Rab are key regulators of intracellular membrane trafficking, from the formation of transport vesicles to their fusion with membranes. Rabs cycle between an inactive GDP-bound form and an active GTP-bound form that is able to recruit to membranes different sets of downstream effectors directly responsible for vesicle formation, movement, tethering and fusion (By similarity). RAB3D may be involved in the insulin-induced exocytosis of GLUT4-containing vesicles in adipocytes (By similarity).</text>
</comment>
<comment type="catalytic activity">
    <reaction evidence="2">
        <text>GTP + H2O = GDP + phosphate + H(+)</text>
        <dbReference type="Rhea" id="RHEA:19669"/>
        <dbReference type="ChEBI" id="CHEBI:15377"/>
        <dbReference type="ChEBI" id="CHEBI:15378"/>
        <dbReference type="ChEBI" id="CHEBI:37565"/>
        <dbReference type="ChEBI" id="CHEBI:43474"/>
        <dbReference type="ChEBI" id="CHEBI:58189"/>
        <dbReference type="EC" id="3.6.5.2"/>
    </reaction>
    <physiologicalReaction direction="left-to-right" evidence="2">
        <dbReference type="Rhea" id="RHEA:19670"/>
    </physiologicalReaction>
</comment>
<comment type="cofactor">
    <cofactor evidence="10">
        <name>Mg(2+)</name>
        <dbReference type="ChEBI" id="CHEBI:18420"/>
    </cofactor>
</comment>
<comment type="activity regulation">
    <text evidence="2">Regulated by guanine nucleotide exchange factors (GEFs) which promote the exchange of bound GDP for free GTP. Regulated by GTPase activating proteins (GAPs) which increase the GTP hydrolysis activity. Inhibited by GDP dissociation inhibitors (GDIs) which prevent Rab-GDP dissociation.</text>
</comment>
<comment type="subunit">
    <text evidence="4 8 9">Interacts with RIMS1, RIMS2, RPH3A, RPH3AL and RAB3IP (By similarity). The GTP-bound form interacts with REP15 (PubMed:35871249). Interacts with CHM and CHML; phosphorylation at Thr-86 disrupts these interactions (PubMed:29125462). Interacts with MADD (via uDENN domain); the GTP-bound form is preferred for interaction (By similarity).</text>
</comment>
<comment type="interaction">
    <interactant intactId="EBI-3386067">
        <id>O95716</id>
    </interactant>
    <interactant intactId="EBI-11984839">
        <id>Q96QF0-7</id>
        <label>RAB3IP</label>
    </interactant>
    <organismsDiffer>false</organismsDiffer>
    <experiments>3</experiments>
</comment>
<comment type="interaction">
    <interactant intactId="EBI-3386067">
        <id>O95716</id>
    </interactant>
    <interactant intactId="EBI-713992">
        <id>P47224</id>
        <label>RABIF</label>
    </interactant>
    <organismsDiffer>false</organismsDiffer>
    <experiments>3</experiments>
</comment>
<comment type="interaction">
    <interactant intactId="EBI-3386067">
        <id>O95716</id>
    </interactant>
    <interactant intactId="EBI-747142">
        <id>Q96C24</id>
        <label>SYTL4</label>
    </interactant>
    <organismsDiffer>false</organismsDiffer>
    <experiments>3</experiments>
</comment>
<comment type="interaction">
    <interactant intactId="EBI-3386067">
        <id>O95716</id>
    </interactant>
    <interactant intactId="EBI-12894399">
        <id>Q9H8Y1</id>
        <label>VRTN</label>
    </interactant>
    <organismsDiffer>false</organismsDiffer>
    <experiments>3</experiments>
</comment>
<comment type="subcellular location">
    <subcellularLocation>
        <location evidence="11">Cell membrane</location>
        <topology evidence="11">Lipid-anchor</topology>
        <orientation evidence="11">Cytoplasmic side</orientation>
    </subcellularLocation>
</comment>
<comment type="tissue specificity">
    <text evidence="7">Highly expressed in granulocytes of peripheral blood (PubMed:10023084). Constitutively expressed at low levels in all hematopoietic cell lines investigated (PubMed:10023084).</text>
</comment>
<comment type="induction">
    <text evidence="7">Activated in myeloid differentiation.</text>
</comment>
<comment type="domain">
    <text evidence="5">Switch 1, switch 2 and the interswitch regions are characteristic of Rab GTPases and mediate the interactions with Rab downstream effectors. The switch regions undergo conformational changes upon nucleotide binding which drives interaction with specific sets of effector proteins, with most effectors only binding to GTP-bound Rab.</text>
</comment>
<comment type="PTM">
    <text evidence="8">Phosphorylation of Thr-86 in the switch II region by LRRK2 prevents the association of RAB regulatory proteins, including CHM and CHML.</text>
</comment>
<comment type="similarity">
    <text evidence="11">Belongs to the small GTPase superfamily. Rab family.</text>
</comment>
<sequence length="219" mass="24267">MASAGDTQAGPRDAADQNFDYMFKLLLIGNSSVGKTSFLFRYADDSFTPAFVSTVGIDFKVKTVYRHDKRIKLQIWDTAGQERYRTITTAYYRGAMGFLLMYDIANQESFAAVQDWATQIKTYSWDNAQVILVGNKCDLEDERVVPAEDGRRLADDLGFEFFEASAKENINVKQVFERLVDVICEKMNESLEPSSSSGSNGKGPAVGDAPAPQPSSCSC</sequence>
<keyword id="KW-0002">3D-structure</keyword>
<keyword id="KW-0007">Acetylation</keyword>
<keyword id="KW-1003">Cell membrane</keyword>
<keyword id="KW-0268">Exocytosis</keyword>
<keyword id="KW-0342">GTP-binding</keyword>
<keyword id="KW-0378">Hydrolase</keyword>
<keyword id="KW-0449">Lipoprotein</keyword>
<keyword id="KW-0460">Magnesium</keyword>
<keyword id="KW-0472">Membrane</keyword>
<keyword id="KW-0479">Metal-binding</keyword>
<keyword id="KW-0488">Methylation</keyword>
<keyword id="KW-0547">Nucleotide-binding</keyword>
<keyword id="KW-0597">Phosphoprotein</keyword>
<keyword id="KW-0636">Prenylation</keyword>
<keyword id="KW-0653">Protein transport</keyword>
<keyword id="KW-1267">Proteomics identification</keyword>
<keyword id="KW-1185">Reference proteome</keyword>
<keyword id="KW-0813">Transport</keyword>
<protein>
    <recommendedName>
        <fullName>Ras-related protein Rab-3D</fullName>
        <ecNumber evidence="2">3.6.5.2</ecNumber>
    </recommendedName>
</protein>
<organism>
    <name type="scientific">Homo sapiens</name>
    <name type="common">Human</name>
    <dbReference type="NCBI Taxonomy" id="9606"/>
    <lineage>
        <taxon>Eukaryota</taxon>
        <taxon>Metazoa</taxon>
        <taxon>Chordata</taxon>
        <taxon>Craniata</taxon>
        <taxon>Vertebrata</taxon>
        <taxon>Euteleostomi</taxon>
        <taxon>Mammalia</taxon>
        <taxon>Eutheria</taxon>
        <taxon>Euarchontoglires</taxon>
        <taxon>Primates</taxon>
        <taxon>Haplorrhini</taxon>
        <taxon>Catarrhini</taxon>
        <taxon>Hominidae</taxon>
        <taxon>Homo</taxon>
    </lineage>
</organism>
<accession>O95716</accession>